<comment type="function">
    <text evidence="1">Catalyzes the conversion of uracil and 5-phospho-alpha-D-ribose 1-diphosphate (PRPP) to UMP and diphosphate.</text>
</comment>
<comment type="catalytic activity">
    <reaction evidence="1">
        <text>UMP + diphosphate = 5-phospho-alpha-D-ribose 1-diphosphate + uracil</text>
        <dbReference type="Rhea" id="RHEA:13017"/>
        <dbReference type="ChEBI" id="CHEBI:17568"/>
        <dbReference type="ChEBI" id="CHEBI:33019"/>
        <dbReference type="ChEBI" id="CHEBI:57865"/>
        <dbReference type="ChEBI" id="CHEBI:58017"/>
        <dbReference type="EC" id="2.4.2.9"/>
    </reaction>
</comment>
<comment type="cofactor">
    <cofactor evidence="1">
        <name>Mg(2+)</name>
        <dbReference type="ChEBI" id="CHEBI:18420"/>
    </cofactor>
    <text evidence="1">Binds 1 Mg(2+) ion per subunit. The magnesium is bound as Mg-PRPP.</text>
</comment>
<comment type="activity regulation">
    <text evidence="1">Allosterically activated by GTP.</text>
</comment>
<comment type="pathway">
    <text evidence="1">Pyrimidine metabolism; UMP biosynthesis via salvage pathway; UMP from uracil: step 1/1.</text>
</comment>
<comment type="similarity">
    <text evidence="1">Belongs to the UPRTase family.</text>
</comment>
<feature type="chain" id="PRO_1000053704" description="Uracil phosphoribosyltransferase">
    <location>
        <begin position="1"/>
        <end position="209"/>
    </location>
</feature>
<feature type="binding site" evidence="1">
    <location>
        <position position="79"/>
    </location>
    <ligand>
        <name>5-phospho-alpha-D-ribose 1-diphosphate</name>
        <dbReference type="ChEBI" id="CHEBI:58017"/>
    </ligand>
</feature>
<feature type="binding site" evidence="1">
    <location>
        <position position="104"/>
    </location>
    <ligand>
        <name>5-phospho-alpha-D-ribose 1-diphosphate</name>
        <dbReference type="ChEBI" id="CHEBI:58017"/>
    </ligand>
</feature>
<feature type="binding site" evidence="1">
    <location>
        <begin position="131"/>
        <end position="139"/>
    </location>
    <ligand>
        <name>5-phospho-alpha-D-ribose 1-diphosphate</name>
        <dbReference type="ChEBI" id="CHEBI:58017"/>
    </ligand>
</feature>
<feature type="binding site" evidence="1">
    <location>
        <position position="194"/>
    </location>
    <ligand>
        <name>uracil</name>
        <dbReference type="ChEBI" id="CHEBI:17568"/>
    </ligand>
</feature>
<feature type="binding site" evidence="1">
    <location>
        <begin position="199"/>
        <end position="201"/>
    </location>
    <ligand>
        <name>uracil</name>
        <dbReference type="ChEBI" id="CHEBI:17568"/>
    </ligand>
</feature>
<feature type="binding site" evidence="1">
    <location>
        <position position="200"/>
    </location>
    <ligand>
        <name>5-phospho-alpha-D-ribose 1-diphosphate</name>
        <dbReference type="ChEBI" id="CHEBI:58017"/>
    </ligand>
</feature>
<keyword id="KW-0021">Allosteric enzyme</keyword>
<keyword id="KW-0328">Glycosyltransferase</keyword>
<keyword id="KW-0342">GTP-binding</keyword>
<keyword id="KW-0460">Magnesium</keyword>
<keyword id="KW-0547">Nucleotide-binding</keyword>
<keyword id="KW-0808">Transferase</keyword>
<name>UPP_CLOBL</name>
<dbReference type="EC" id="2.4.2.9" evidence="1"/>
<dbReference type="EMBL" id="CP000728">
    <property type="protein sequence ID" value="ABS39450.1"/>
    <property type="molecule type" value="Genomic_DNA"/>
</dbReference>
<dbReference type="RefSeq" id="WP_003360558.1">
    <property type="nucleotide sequence ID" value="NC_009699.1"/>
</dbReference>
<dbReference type="SMR" id="A7G9P8"/>
<dbReference type="GeneID" id="5184400"/>
<dbReference type="KEGG" id="cbf:CLI_0200"/>
<dbReference type="HOGENOM" id="CLU_067096_2_2_9"/>
<dbReference type="UniPathway" id="UPA00574">
    <property type="reaction ID" value="UER00636"/>
</dbReference>
<dbReference type="Proteomes" id="UP000002410">
    <property type="component" value="Chromosome"/>
</dbReference>
<dbReference type="GO" id="GO:0005525">
    <property type="term" value="F:GTP binding"/>
    <property type="evidence" value="ECO:0007669"/>
    <property type="project" value="UniProtKB-KW"/>
</dbReference>
<dbReference type="GO" id="GO:0000287">
    <property type="term" value="F:magnesium ion binding"/>
    <property type="evidence" value="ECO:0007669"/>
    <property type="project" value="UniProtKB-UniRule"/>
</dbReference>
<dbReference type="GO" id="GO:0004845">
    <property type="term" value="F:uracil phosphoribosyltransferase activity"/>
    <property type="evidence" value="ECO:0007669"/>
    <property type="project" value="UniProtKB-UniRule"/>
</dbReference>
<dbReference type="GO" id="GO:0044206">
    <property type="term" value="P:UMP salvage"/>
    <property type="evidence" value="ECO:0007669"/>
    <property type="project" value="UniProtKB-UniRule"/>
</dbReference>
<dbReference type="GO" id="GO:0006223">
    <property type="term" value="P:uracil salvage"/>
    <property type="evidence" value="ECO:0007669"/>
    <property type="project" value="InterPro"/>
</dbReference>
<dbReference type="CDD" id="cd06223">
    <property type="entry name" value="PRTases_typeI"/>
    <property type="match status" value="1"/>
</dbReference>
<dbReference type="FunFam" id="3.40.50.2020:FF:000003">
    <property type="entry name" value="Uracil phosphoribosyltransferase"/>
    <property type="match status" value="1"/>
</dbReference>
<dbReference type="Gene3D" id="3.40.50.2020">
    <property type="match status" value="1"/>
</dbReference>
<dbReference type="HAMAP" id="MF_01218_B">
    <property type="entry name" value="Upp_B"/>
    <property type="match status" value="1"/>
</dbReference>
<dbReference type="InterPro" id="IPR000836">
    <property type="entry name" value="PRibTrfase_dom"/>
</dbReference>
<dbReference type="InterPro" id="IPR029057">
    <property type="entry name" value="PRTase-like"/>
</dbReference>
<dbReference type="InterPro" id="IPR034332">
    <property type="entry name" value="Upp_B"/>
</dbReference>
<dbReference type="InterPro" id="IPR050054">
    <property type="entry name" value="UPRTase/APRTase"/>
</dbReference>
<dbReference type="InterPro" id="IPR005765">
    <property type="entry name" value="Ura_phspho_trans"/>
</dbReference>
<dbReference type="NCBIfam" id="NF001097">
    <property type="entry name" value="PRK00129.1"/>
    <property type="match status" value="1"/>
</dbReference>
<dbReference type="NCBIfam" id="TIGR01091">
    <property type="entry name" value="upp"/>
    <property type="match status" value="1"/>
</dbReference>
<dbReference type="PANTHER" id="PTHR32315">
    <property type="entry name" value="ADENINE PHOSPHORIBOSYLTRANSFERASE"/>
    <property type="match status" value="1"/>
</dbReference>
<dbReference type="PANTHER" id="PTHR32315:SF4">
    <property type="entry name" value="URACIL PHOSPHORIBOSYLTRANSFERASE, CHLOROPLASTIC"/>
    <property type="match status" value="1"/>
</dbReference>
<dbReference type="Pfam" id="PF14681">
    <property type="entry name" value="UPRTase"/>
    <property type="match status" value="1"/>
</dbReference>
<dbReference type="SUPFAM" id="SSF53271">
    <property type="entry name" value="PRTase-like"/>
    <property type="match status" value="1"/>
</dbReference>
<sequence length="209" mass="22869">MSKVTQIAHPLILHKLALIRDKNTGSKDFRELVEEVAMLMAYEVTRDLQLKEVEIETPICKTKCKMLSGKKVAIVPILRAGLGMVGGMTSLIPAAKVGHIGLYRDEETLKPVEYFCKLPQDIGDRDVIVTDPMLATGGSAKDAITLLKQKGAKHIRLMCLVAAPEGIKEVMDEHPDVDIYVASVDEKLNEKGYVVPGLGDAGDRLYGTK</sequence>
<evidence type="ECO:0000255" key="1">
    <source>
        <dbReference type="HAMAP-Rule" id="MF_01218"/>
    </source>
</evidence>
<organism>
    <name type="scientific">Clostridium botulinum (strain Langeland / NCTC 10281 / Type F)</name>
    <dbReference type="NCBI Taxonomy" id="441772"/>
    <lineage>
        <taxon>Bacteria</taxon>
        <taxon>Bacillati</taxon>
        <taxon>Bacillota</taxon>
        <taxon>Clostridia</taxon>
        <taxon>Eubacteriales</taxon>
        <taxon>Clostridiaceae</taxon>
        <taxon>Clostridium</taxon>
    </lineage>
</organism>
<protein>
    <recommendedName>
        <fullName evidence="1">Uracil phosphoribosyltransferase</fullName>
        <ecNumber evidence="1">2.4.2.9</ecNumber>
    </recommendedName>
    <alternativeName>
        <fullName evidence="1">UMP pyrophosphorylase</fullName>
    </alternativeName>
    <alternativeName>
        <fullName evidence="1">UPRTase</fullName>
    </alternativeName>
</protein>
<accession>A7G9P8</accession>
<proteinExistence type="inferred from homology"/>
<reference key="1">
    <citation type="submission" date="2007-06" db="EMBL/GenBank/DDBJ databases">
        <authorList>
            <person name="Brinkac L.M."/>
            <person name="Daugherty S."/>
            <person name="Dodson R.J."/>
            <person name="Madupu R."/>
            <person name="Brown J.L."/>
            <person name="Bruce D."/>
            <person name="Detter C."/>
            <person name="Munk C."/>
            <person name="Smith L.A."/>
            <person name="Smith T.J."/>
            <person name="White O."/>
            <person name="Brettin T.S."/>
        </authorList>
    </citation>
    <scope>NUCLEOTIDE SEQUENCE [LARGE SCALE GENOMIC DNA]</scope>
    <source>
        <strain>Langeland / NCTC 10281 / Type F</strain>
    </source>
</reference>
<gene>
    <name evidence="1" type="primary">upp</name>
    <name type="ordered locus">CLI_0200</name>
</gene>